<sequence length="210" mass="23393">MSDFGINLDAICDNVKYKSSNSRTGSQVSNRSSRRMDFVDEEELSTYFNSKASVTQSDSCSNDLAVKTSIITEAVICDESEHVSADAIQEKEESIMQVDDNVMKWMMDSHDGISMNGGINFSRSKSKTGRSDFTESKSETSVSAHVSAGISSQLGMFNPIQNTVKKEAISEMFEDEDGDGCTCRNCPYREKYLKLRNKMKSVLVDMINEM</sequence>
<name>NSP5_ROTPC</name>
<dbReference type="EMBL" id="X65938">
    <property type="protein sequence ID" value="CAA46741.1"/>
    <property type="molecule type" value="mRNA"/>
</dbReference>
<dbReference type="PIR" id="B48357">
    <property type="entry name" value="B48357"/>
</dbReference>
<dbReference type="Proteomes" id="UP000008175">
    <property type="component" value="Genome"/>
</dbReference>
<dbReference type="GO" id="GO:0030430">
    <property type="term" value="C:host cell cytoplasm"/>
    <property type="evidence" value="ECO:0007669"/>
    <property type="project" value="UniProtKB-SubCell"/>
</dbReference>
<dbReference type="GO" id="GO:0016887">
    <property type="term" value="F:ATP hydrolysis activity"/>
    <property type="evidence" value="ECO:0007669"/>
    <property type="project" value="UniProtKB-UniRule"/>
</dbReference>
<dbReference type="GO" id="GO:0000287">
    <property type="term" value="F:magnesium ion binding"/>
    <property type="evidence" value="ECO:0007669"/>
    <property type="project" value="UniProtKB-UniRule"/>
</dbReference>
<dbReference type="GO" id="GO:0000166">
    <property type="term" value="F:nucleotide binding"/>
    <property type="evidence" value="ECO:0007669"/>
    <property type="project" value="UniProtKB-UniRule"/>
</dbReference>
<dbReference type="GO" id="GO:0003723">
    <property type="term" value="F:RNA binding"/>
    <property type="evidence" value="ECO:0007669"/>
    <property type="project" value="UniProtKB-UniRule"/>
</dbReference>
<dbReference type="GO" id="GO:0019079">
    <property type="term" value="P:viral genome replication"/>
    <property type="evidence" value="ECO:0007669"/>
    <property type="project" value="UniProtKB-UniRule"/>
</dbReference>
<dbReference type="HAMAP" id="MF_04092">
    <property type="entry name" value="ROTA_NSP5"/>
    <property type="match status" value="1"/>
</dbReference>
<dbReference type="InterPro" id="IPR002512">
    <property type="entry name" value="Rotavirus_A/C_NSP5"/>
</dbReference>
<dbReference type="Pfam" id="PF01525">
    <property type="entry name" value="Rota_NS26"/>
    <property type="match status" value="1"/>
</dbReference>
<dbReference type="PIRSF" id="PIRSF004006">
    <property type="entry name" value="Rota_NS26"/>
    <property type="match status" value="1"/>
</dbReference>
<keyword id="KW-0325">Glycoprotein</keyword>
<keyword id="KW-1035">Host cytoplasm</keyword>
<keyword id="KW-0460">Magnesium</keyword>
<keyword id="KW-0479">Metal-binding</keyword>
<keyword id="KW-0547">Nucleotide-binding</keyword>
<keyword id="KW-0694">RNA-binding</keyword>
<organism>
    <name type="scientific">Rotavirus C (strain RVC/Pig/United States/Cowden/1980)</name>
    <name type="common">RV-C</name>
    <dbReference type="NCBI Taxonomy" id="10916"/>
    <lineage>
        <taxon>Viruses</taxon>
        <taxon>Riboviria</taxon>
        <taxon>Orthornavirae</taxon>
        <taxon>Duplornaviricota</taxon>
        <taxon>Resentoviricetes</taxon>
        <taxon>Reovirales</taxon>
        <taxon>Sedoreoviridae</taxon>
        <taxon>Rotavirus</taxon>
        <taxon>Rotavirus C</taxon>
    </lineage>
</organism>
<evidence type="ECO:0000255" key="1">
    <source>
        <dbReference type="HAMAP-Rule" id="MF_04092"/>
    </source>
</evidence>
<evidence type="ECO:0000256" key="2">
    <source>
        <dbReference type="SAM" id="MobiDB-lite"/>
    </source>
</evidence>
<organismHost>
    <name type="scientific">Sus scrofa</name>
    <name type="common">Pig</name>
    <dbReference type="NCBI Taxonomy" id="9823"/>
</organismHost>
<proteinExistence type="evidence at transcript level"/>
<reference key="1">
    <citation type="journal article" date="1993" name="Arch. Virol.">
        <title>Sequence analysis of three non structural proteins of a porcine group C (Cowden strain) rotavirus.</title>
        <authorList>
            <person name="Bremont M."/>
            <person name="Chabanne-Vautherot D."/>
            <person name="Cohen J."/>
        </authorList>
    </citation>
    <scope>NUCLEOTIDE SEQUENCE [MRNA]</scope>
</reference>
<comment type="function">
    <text evidence="1">Plays an essential role in the viral genome replication. Participates, together with NSP2, in the formation of viral factories (viroplasms) which are large inclusions in the host cytoplasm where replication intermediates are assembled and viral RNA replication takes place. Orchestrates the recruitment of viroplasmic proteins such as capsid proteins to these factories.</text>
</comment>
<comment type="cofactor">
    <cofactor evidence="1">
        <name>Mg(2+)</name>
        <dbReference type="ChEBI" id="CHEBI:18420"/>
    </cofactor>
</comment>
<comment type="subunit">
    <text evidence="1">Homodimer. Interacts with VP1. Interacts with VP2. Interacts with NSP2 and NSP6.</text>
</comment>
<comment type="subcellular location">
    <subcellularLocation>
        <location evidence="1">Host cytoplasm</location>
    </subcellularLocation>
    <text evidence="1">Found in spherical cytoplasmic structures, called virus factories, that appear early after infection and are the site of viral replication and packaging.</text>
</comment>
<comment type="PTM">
    <text evidence="1">O-glycosylated.</text>
</comment>
<comment type="similarity">
    <text evidence="1">Belongs to the rotavirus NSP5 family.</text>
</comment>
<accession>P36358</accession>
<feature type="chain" id="PRO_0000149644" description="Non-structural protein 5">
    <location>
        <begin position="1"/>
        <end position="210"/>
    </location>
</feature>
<feature type="region of interest" description="Disordered" evidence="2">
    <location>
        <begin position="119"/>
        <end position="141"/>
    </location>
</feature>
<feature type="compositionally biased region" description="Basic and acidic residues" evidence="2">
    <location>
        <begin position="129"/>
        <end position="138"/>
    </location>
</feature>
<feature type="binding site" evidence="1">
    <location>
        <position position="86"/>
    </location>
    <ligand>
        <name>Mg(2+)</name>
        <dbReference type="ChEBI" id="CHEBI:18420"/>
    </ligand>
</feature>
<protein>
    <recommendedName>
        <fullName evidence="1">Non-structural protein 5</fullName>
        <shortName evidence="1">NSP5</shortName>
    </recommendedName>
    <alternativeName>
        <fullName evidence="1">NS26</fullName>
    </alternativeName>
</protein>